<gene>
    <name evidence="1" type="primary">rpsU2</name>
    <name type="ordered locus">FTT_0753</name>
</gene>
<reference key="1">
    <citation type="journal article" date="2005" name="Nat. Genet.">
        <title>The complete genome sequence of Francisella tularensis, the causative agent of tularemia.</title>
        <authorList>
            <person name="Larsson P."/>
            <person name="Oyston P.C.F."/>
            <person name="Chain P."/>
            <person name="Chu M.C."/>
            <person name="Duffield M."/>
            <person name="Fuxelius H.-H."/>
            <person name="Garcia E."/>
            <person name="Haelltorp G."/>
            <person name="Johansson D."/>
            <person name="Isherwood K.E."/>
            <person name="Karp P.D."/>
            <person name="Larsson E."/>
            <person name="Liu Y."/>
            <person name="Michell S."/>
            <person name="Prior J."/>
            <person name="Prior R."/>
            <person name="Malfatti S."/>
            <person name="Sjoestedt A."/>
            <person name="Svensson K."/>
            <person name="Thompson N."/>
            <person name="Vergez L."/>
            <person name="Wagg J.K."/>
            <person name="Wren B.W."/>
            <person name="Lindler L.E."/>
            <person name="Andersson S.G.E."/>
            <person name="Forsman M."/>
            <person name="Titball R.W."/>
        </authorList>
    </citation>
    <scope>NUCLEOTIDE SEQUENCE [LARGE SCALE GENOMIC DNA]</scope>
    <source>
        <strain>SCHU S4 / Schu 4</strain>
    </source>
</reference>
<dbReference type="EMBL" id="AJ749949">
    <property type="protein sequence ID" value="CAG45386.1"/>
    <property type="molecule type" value="Genomic_DNA"/>
</dbReference>
<dbReference type="RefSeq" id="YP_169764.1">
    <property type="nucleotide sequence ID" value="NC_006570.2"/>
</dbReference>
<dbReference type="SMR" id="Q5NGS8"/>
<dbReference type="STRING" id="177416.FTT_0753"/>
<dbReference type="DNASU" id="3191263"/>
<dbReference type="EnsemblBacteria" id="CAG45386">
    <property type="protein sequence ID" value="CAG45386"/>
    <property type="gene ID" value="FTT_0753"/>
</dbReference>
<dbReference type="KEGG" id="ftu:FTT_0753"/>
<dbReference type="eggNOG" id="COG0828">
    <property type="taxonomic scope" value="Bacteria"/>
</dbReference>
<dbReference type="OrthoDB" id="9799244at2"/>
<dbReference type="Proteomes" id="UP000001174">
    <property type="component" value="Chromosome"/>
</dbReference>
<dbReference type="GO" id="GO:1990904">
    <property type="term" value="C:ribonucleoprotein complex"/>
    <property type="evidence" value="ECO:0007669"/>
    <property type="project" value="UniProtKB-KW"/>
</dbReference>
<dbReference type="GO" id="GO:0005840">
    <property type="term" value="C:ribosome"/>
    <property type="evidence" value="ECO:0007669"/>
    <property type="project" value="UniProtKB-KW"/>
</dbReference>
<dbReference type="GO" id="GO:0003735">
    <property type="term" value="F:structural constituent of ribosome"/>
    <property type="evidence" value="ECO:0007669"/>
    <property type="project" value="InterPro"/>
</dbReference>
<dbReference type="GO" id="GO:0006412">
    <property type="term" value="P:translation"/>
    <property type="evidence" value="ECO:0007669"/>
    <property type="project" value="UniProtKB-UniRule"/>
</dbReference>
<dbReference type="Gene3D" id="1.20.5.1150">
    <property type="entry name" value="Ribosomal protein S8"/>
    <property type="match status" value="1"/>
</dbReference>
<dbReference type="HAMAP" id="MF_00358">
    <property type="entry name" value="Ribosomal_bS21"/>
    <property type="match status" value="1"/>
</dbReference>
<dbReference type="InterPro" id="IPR001911">
    <property type="entry name" value="Ribosomal_bS21"/>
</dbReference>
<dbReference type="InterPro" id="IPR038380">
    <property type="entry name" value="Ribosomal_bS21_sf"/>
</dbReference>
<dbReference type="NCBIfam" id="TIGR00030">
    <property type="entry name" value="S21p"/>
    <property type="match status" value="1"/>
</dbReference>
<dbReference type="Pfam" id="PF01165">
    <property type="entry name" value="Ribosomal_S21"/>
    <property type="match status" value="1"/>
</dbReference>
<dbReference type="PRINTS" id="PR00976">
    <property type="entry name" value="RIBOSOMALS21"/>
</dbReference>
<proteinExistence type="inferred from homology"/>
<accession>Q5NGS8</accession>
<comment type="similarity">
    <text evidence="1">Belongs to the bacterial ribosomal protein bS21 family.</text>
</comment>
<evidence type="ECO:0000255" key="1">
    <source>
        <dbReference type="HAMAP-Rule" id="MF_00358"/>
    </source>
</evidence>
<evidence type="ECO:0000256" key="2">
    <source>
        <dbReference type="SAM" id="MobiDB-lite"/>
    </source>
</evidence>
<evidence type="ECO:0000305" key="3"/>
<organism>
    <name type="scientific">Francisella tularensis subsp. tularensis (strain SCHU S4 / Schu 4)</name>
    <dbReference type="NCBI Taxonomy" id="177416"/>
    <lineage>
        <taxon>Bacteria</taxon>
        <taxon>Pseudomonadati</taxon>
        <taxon>Pseudomonadota</taxon>
        <taxon>Gammaproteobacteria</taxon>
        <taxon>Thiotrichales</taxon>
        <taxon>Francisellaceae</taxon>
        <taxon>Francisella</taxon>
    </lineage>
</organism>
<feature type="chain" id="PRO_0000266675" description="Small ribosomal subunit protein bS21B">
    <location>
        <begin position="1"/>
        <end position="66"/>
    </location>
</feature>
<feature type="region of interest" description="Disordered" evidence="2">
    <location>
        <begin position="38"/>
        <end position="66"/>
    </location>
</feature>
<keyword id="KW-1185">Reference proteome</keyword>
<keyword id="KW-0687">Ribonucleoprotein</keyword>
<keyword id="KW-0689">Ribosomal protein</keyword>
<name>RS212_FRATT</name>
<sequence>MPRIIVDPKKPFDISLRNFKRACEKAGIKQELRDRQHYVKPTQKRKIAKKAAISKAKKEARRSYSY</sequence>
<protein>
    <recommendedName>
        <fullName evidence="1">Small ribosomal subunit protein bS21B</fullName>
    </recommendedName>
    <alternativeName>
        <fullName evidence="3">30S ribosomal protein S21 2</fullName>
    </alternativeName>
</protein>